<reference key="1">
    <citation type="journal article" date="2005" name="Science">
        <title>Life at depth: Photobacterium profundum genome sequence and expression analysis.</title>
        <authorList>
            <person name="Vezzi A."/>
            <person name="Campanaro S."/>
            <person name="D'Angelo M."/>
            <person name="Simonato F."/>
            <person name="Vitulo N."/>
            <person name="Lauro F.M."/>
            <person name="Cestaro A."/>
            <person name="Malacrida G."/>
            <person name="Simionati B."/>
            <person name="Cannata N."/>
            <person name="Romualdi C."/>
            <person name="Bartlett D.H."/>
            <person name="Valle G."/>
        </authorList>
    </citation>
    <scope>NUCLEOTIDE SEQUENCE [LARGE SCALE GENOMIC DNA]</scope>
    <source>
        <strain>ATCC BAA-1253 / SS9</strain>
    </source>
</reference>
<name>Y1522_PHOPR</name>
<gene>
    <name type="ordered locus">PBPRA1522</name>
</gene>
<protein>
    <recommendedName>
        <fullName evidence="1">Putative double-stranded DNA mimic protein PBPRA1522</fullName>
    </recommendedName>
</protein>
<evidence type="ECO:0000255" key="1">
    <source>
        <dbReference type="HAMAP-Rule" id="MF_00680"/>
    </source>
</evidence>
<proteinExistence type="inferred from homology"/>
<organism>
    <name type="scientific">Photobacterium profundum (strain SS9)</name>
    <dbReference type="NCBI Taxonomy" id="298386"/>
    <lineage>
        <taxon>Bacteria</taxon>
        <taxon>Pseudomonadati</taxon>
        <taxon>Pseudomonadota</taxon>
        <taxon>Gammaproteobacteria</taxon>
        <taxon>Vibrionales</taxon>
        <taxon>Vibrionaceae</taxon>
        <taxon>Photobacterium</taxon>
    </lineage>
</organism>
<feature type="chain" id="PRO_1000044912" description="Putative double-stranded DNA mimic protein PBPRA1522">
    <location>
        <begin position="1"/>
        <end position="108"/>
    </location>
</feature>
<sequence>METSNLISYDDVIDAAYDIFLEMASESLEPVDVILFTAQFDDRGAAEAVETRDDWSSHVGFDVDKELYAEVRIGLVNEENDQLDDVFARMLISRDPDHKFCHILWKRD</sequence>
<keyword id="KW-1185">Reference proteome</keyword>
<comment type="function">
    <text evidence="1">May act as a double-stranded DNA (dsDNA) mimic. Probably regulates the activity of a dsDNA-binding protein.</text>
</comment>
<comment type="similarity">
    <text evidence="1">Belongs to the putative dsDNA mimic protein family.</text>
</comment>
<dbReference type="EMBL" id="CR378667">
    <property type="protein sequence ID" value="CAG19933.1"/>
    <property type="molecule type" value="Genomic_DNA"/>
</dbReference>
<dbReference type="RefSeq" id="WP_011218254.1">
    <property type="nucleotide sequence ID" value="NC_006370.1"/>
</dbReference>
<dbReference type="SMR" id="Q6LRZ3"/>
<dbReference type="STRING" id="298386.PBPRA1522"/>
<dbReference type="KEGG" id="ppr:PBPRA1522"/>
<dbReference type="eggNOG" id="COG3099">
    <property type="taxonomic scope" value="Bacteria"/>
</dbReference>
<dbReference type="HOGENOM" id="CLU_143392_0_0_6"/>
<dbReference type="Proteomes" id="UP000000593">
    <property type="component" value="Chromosome 1"/>
</dbReference>
<dbReference type="Gene3D" id="3.10.450.140">
    <property type="entry name" value="dsDNA mimic, putative"/>
    <property type="match status" value="1"/>
</dbReference>
<dbReference type="HAMAP" id="MF_00680">
    <property type="entry name" value="Put_dsDNA_mimic"/>
    <property type="match status" value="1"/>
</dbReference>
<dbReference type="InterPro" id="IPR007376">
    <property type="entry name" value="dsDNA_mimic_put"/>
</dbReference>
<dbReference type="InterPro" id="IPR036763">
    <property type="entry name" value="Put_dsDNA_mimic_sf"/>
</dbReference>
<dbReference type="NCBIfam" id="NF003469">
    <property type="entry name" value="PRK05094.1"/>
    <property type="match status" value="1"/>
</dbReference>
<dbReference type="Pfam" id="PF04269">
    <property type="entry name" value="DUF440"/>
    <property type="match status" value="1"/>
</dbReference>
<dbReference type="PIRSF" id="PIRSF004916">
    <property type="entry name" value="UCP004916"/>
    <property type="match status" value="1"/>
</dbReference>
<dbReference type="SUPFAM" id="SSF102816">
    <property type="entry name" value="Putative dsDNA mimic"/>
    <property type="match status" value="1"/>
</dbReference>
<accession>Q6LRZ3</accession>